<accession>B3PKG0</accession>
<gene>
    <name evidence="1" type="primary">azoR</name>
    <name type="ordered locus">CJA_2428</name>
</gene>
<dbReference type="EC" id="1.6.5.-" evidence="1"/>
<dbReference type="EC" id="1.7.1.17" evidence="1"/>
<dbReference type="EMBL" id="CP000934">
    <property type="protein sequence ID" value="ACE85549.1"/>
    <property type="molecule type" value="Genomic_DNA"/>
</dbReference>
<dbReference type="RefSeq" id="WP_012488026.1">
    <property type="nucleotide sequence ID" value="NC_010995.1"/>
</dbReference>
<dbReference type="SMR" id="B3PKG0"/>
<dbReference type="STRING" id="498211.CJA_2428"/>
<dbReference type="KEGG" id="cja:CJA_2428"/>
<dbReference type="eggNOG" id="COG1182">
    <property type="taxonomic scope" value="Bacteria"/>
</dbReference>
<dbReference type="HOGENOM" id="CLU_088964_0_0_6"/>
<dbReference type="OrthoDB" id="9787136at2"/>
<dbReference type="Proteomes" id="UP000001036">
    <property type="component" value="Chromosome"/>
</dbReference>
<dbReference type="GO" id="GO:0009055">
    <property type="term" value="F:electron transfer activity"/>
    <property type="evidence" value="ECO:0007669"/>
    <property type="project" value="UniProtKB-UniRule"/>
</dbReference>
<dbReference type="GO" id="GO:0010181">
    <property type="term" value="F:FMN binding"/>
    <property type="evidence" value="ECO:0007669"/>
    <property type="project" value="UniProtKB-UniRule"/>
</dbReference>
<dbReference type="GO" id="GO:0016652">
    <property type="term" value="F:oxidoreductase activity, acting on NAD(P)H as acceptor"/>
    <property type="evidence" value="ECO:0007669"/>
    <property type="project" value="UniProtKB-UniRule"/>
</dbReference>
<dbReference type="GO" id="GO:0016655">
    <property type="term" value="F:oxidoreductase activity, acting on NAD(P)H, quinone or similar compound as acceptor"/>
    <property type="evidence" value="ECO:0007669"/>
    <property type="project" value="InterPro"/>
</dbReference>
<dbReference type="Gene3D" id="3.40.50.360">
    <property type="match status" value="1"/>
</dbReference>
<dbReference type="HAMAP" id="MF_01216">
    <property type="entry name" value="Azoreductase_type1"/>
    <property type="match status" value="1"/>
</dbReference>
<dbReference type="InterPro" id="IPR003680">
    <property type="entry name" value="Flavodoxin_fold"/>
</dbReference>
<dbReference type="InterPro" id="IPR029039">
    <property type="entry name" value="Flavoprotein-like_sf"/>
</dbReference>
<dbReference type="InterPro" id="IPR050104">
    <property type="entry name" value="FMN-dep_NADH:Q_OxRdtase_AzoR1"/>
</dbReference>
<dbReference type="InterPro" id="IPR023048">
    <property type="entry name" value="NADH:quinone_OxRdtase_FMN_depd"/>
</dbReference>
<dbReference type="PANTHER" id="PTHR43741">
    <property type="entry name" value="FMN-DEPENDENT NADH-AZOREDUCTASE 1"/>
    <property type="match status" value="1"/>
</dbReference>
<dbReference type="PANTHER" id="PTHR43741:SF2">
    <property type="entry name" value="FMN-DEPENDENT NADH:QUINONE OXIDOREDUCTASE"/>
    <property type="match status" value="1"/>
</dbReference>
<dbReference type="Pfam" id="PF02525">
    <property type="entry name" value="Flavodoxin_2"/>
    <property type="match status" value="1"/>
</dbReference>
<dbReference type="SUPFAM" id="SSF52218">
    <property type="entry name" value="Flavoproteins"/>
    <property type="match status" value="1"/>
</dbReference>
<keyword id="KW-0285">Flavoprotein</keyword>
<keyword id="KW-0288">FMN</keyword>
<keyword id="KW-0520">NAD</keyword>
<keyword id="KW-0560">Oxidoreductase</keyword>
<keyword id="KW-1185">Reference proteome</keyword>
<evidence type="ECO:0000255" key="1">
    <source>
        <dbReference type="HAMAP-Rule" id="MF_01216"/>
    </source>
</evidence>
<name>AZOR_CELJU</name>
<comment type="function">
    <text evidence="1">Quinone reductase that provides resistance to thiol-specific stress caused by electrophilic quinones.</text>
</comment>
<comment type="function">
    <text evidence="1">Also exhibits azoreductase activity. Catalyzes the reductive cleavage of the azo bond in aromatic azo compounds to the corresponding amines.</text>
</comment>
<comment type="catalytic activity">
    <reaction evidence="1">
        <text>2 a quinone + NADH + H(+) = 2 a 1,4-benzosemiquinone + NAD(+)</text>
        <dbReference type="Rhea" id="RHEA:65952"/>
        <dbReference type="ChEBI" id="CHEBI:15378"/>
        <dbReference type="ChEBI" id="CHEBI:57540"/>
        <dbReference type="ChEBI" id="CHEBI:57945"/>
        <dbReference type="ChEBI" id="CHEBI:132124"/>
        <dbReference type="ChEBI" id="CHEBI:134225"/>
    </reaction>
</comment>
<comment type="catalytic activity">
    <reaction evidence="1">
        <text>N,N-dimethyl-1,4-phenylenediamine + anthranilate + 2 NAD(+) = 2-(4-dimethylaminophenyl)diazenylbenzoate + 2 NADH + 2 H(+)</text>
        <dbReference type="Rhea" id="RHEA:55872"/>
        <dbReference type="ChEBI" id="CHEBI:15378"/>
        <dbReference type="ChEBI" id="CHEBI:15783"/>
        <dbReference type="ChEBI" id="CHEBI:16567"/>
        <dbReference type="ChEBI" id="CHEBI:57540"/>
        <dbReference type="ChEBI" id="CHEBI:57945"/>
        <dbReference type="ChEBI" id="CHEBI:71579"/>
        <dbReference type="EC" id="1.7.1.17"/>
    </reaction>
</comment>
<comment type="cofactor">
    <cofactor evidence="1">
        <name>FMN</name>
        <dbReference type="ChEBI" id="CHEBI:58210"/>
    </cofactor>
    <text evidence="1">Binds 1 FMN per subunit.</text>
</comment>
<comment type="subunit">
    <text evidence="1">Homodimer.</text>
</comment>
<comment type="similarity">
    <text evidence="1">Belongs to the azoreductase type 1 family.</text>
</comment>
<reference key="1">
    <citation type="journal article" date="2008" name="J. Bacteriol.">
        <title>Insights into plant cell wall degradation from the genome sequence of the soil bacterium Cellvibrio japonicus.</title>
        <authorList>
            <person name="DeBoy R.T."/>
            <person name="Mongodin E.F."/>
            <person name="Fouts D.E."/>
            <person name="Tailford L.E."/>
            <person name="Khouri H."/>
            <person name="Emerson J.B."/>
            <person name="Mohamoud Y."/>
            <person name="Watkins K."/>
            <person name="Henrissat B."/>
            <person name="Gilbert H.J."/>
            <person name="Nelson K.E."/>
        </authorList>
    </citation>
    <scope>NUCLEOTIDE SEQUENCE [LARGE SCALE GENOMIC DNA]</scope>
    <source>
        <strain>Ueda107</strain>
    </source>
</reference>
<feature type="chain" id="PRO_1000138969" description="FMN-dependent NADH:quinone oxidoreductase">
    <location>
        <begin position="1"/>
        <end position="199"/>
    </location>
</feature>
<feature type="binding site" evidence="1">
    <location>
        <position position="10"/>
    </location>
    <ligand>
        <name>FMN</name>
        <dbReference type="ChEBI" id="CHEBI:58210"/>
    </ligand>
</feature>
<proteinExistence type="inferred from homology"/>
<sequence length="199" mass="21970">MATLLQIKSSLFGDNGNSSQLANEFVERWKTQNPNGEVVIRDFAKEDVPHLDATRVQALFTPAEQRTAEQQAVVEYSDKIIAEIQAADAIVLGVPLYNFGIPSTLKAYFDHIARAGVTFKYTETGPVGLLTDKPVYILAARGGIYKGQPSDTQSRYLVDFLNFVGLKDIHFIYAEGLNMGQKDQAFASAKHEIEQEIAA</sequence>
<protein>
    <recommendedName>
        <fullName evidence="1">FMN-dependent NADH:quinone oxidoreductase</fullName>
        <ecNumber evidence="1">1.6.5.-</ecNumber>
    </recommendedName>
    <alternativeName>
        <fullName evidence="1">Azo-dye reductase</fullName>
    </alternativeName>
    <alternativeName>
        <fullName evidence="1">FMN-dependent NADH-azo compound oxidoreductase</fullName>
    </alternativeName>
    <alternativeName>
        <fullName evidence="1">FMN-dependent NADH-azoreductase</fullName>
        <ecNumber evidence="1">1.7.1.17</ecNumber>
    </alternativeName>
</protein>
<organism>
    <name type="scientific">Cellvibrio japonicus (strain Ueda107)</name>
    <name type="common">Pseudomonas fluorescens subsp. cellulosa</name>
    <dbReference type="NCBI Taxonomy" id="498211"/>
    <lineage>
        <taxon>Bacteria</taxon>
        <taxon>Pseudomonadati</taxon>
        <taxon>Pseudomonadota</taxon>
        <taxon>Gammaproteobacteria</taxon>
        <taxon>Cellvibrionales</taxon>
        <taxon>Cellvibrionaceae</taxon>
        <taxon>Cellvibrio</taxon>
    </lineage>
</organism>